<comment type="subcellular location">
    <subcellularLocation>
        <location evidence="2">Membrane</location>
        <topology evidence="2">Multi-pass membrane protein</topology>
    </subcellularLocation>
</comment>
<comment type="caution">
    <text evidence="3">Product of a dubious gene prediction unlikely to encode a functional protein. Because of that it is not part of the S.cerevisiae S288c complete/reference proteome set.</text>
</comment>
<reference key="1">
    <citation type="journal article" date="1995" name="Yeast">
        <title>Sequence of a 17.1 kb DNA fragment from chromosome X of Saccharomyces cerevisiae includes the mitochondrial ribosomal protein L8.</title>
        <authorList>
            <person name="Vandenbol M."/>
            <person name="Durand P."/>
            <person name="Dion C."/>
            <person name="Portetelle D."/>
            <person name="Hilger F."/>
        </authorList>
    </citation>
    <scope>NUCLEOTIDE SEQUENCE [GENOMIC DNA]</scope>
    <source>
        <strain>ATCC 204508 / S288c</strain>
    </source>
</reference>
<reference key="2">
    <citation type="journal article" date="1996" name="EMBO J.">
        <title>Complete nucleotide sequence of Saccharomyces cerevisiae chromosome X.</title>
        <authorList>
            <person name="Galibert F."/>
            <person name="Alexandraki D."/>
            <person name="Baur A."/>
            <person name="Boles E."/>
            <person name="Chalwatzis N."/>
            <person name="Chuat J.-C."/>
            <person name="Coster F."/>
            <person name="Cziepluch C."/>
            <person name="de Haan M."/>
            <person name="Domdey H."/>
            <person name="Durand P."/>
            <person name="Entian K.-D."/>
            <person name="Gatius M."/>
            <person name="Goffeau A."/>
            <person name="Grivell L.A."/>
            <person name="Hennemann A."/>
            <person name="Herbert C.J."/>
            <person name="Heumann K."/>
            <person name="Hilger F."/>
            <person name="Hollenberg C.P."/>
            <person name="Huang M.-E."/>
            <person name="Jacq C."/>
            <person name="Jauniaux J.-C."/>
            <person name="Katsoulou C."/>
            <person name="Kirchrath L."/>
            <person name="Kleine K."/>
            <person name="Kordes E."/>
            <person name="Koetter P."/>
            <person name="Liebl S."/>
            <person name="Louis E.J."/>
            <person name="Manus V."/>
            <person name="Mewes H.-W."/>
            <person name="Miosga T."/>
            <person name="Obermaier B."/>
            <person name="Perea J."/>
            <person name="Pohl T.M."/>
            <person name="Portetelle D."/>
            <person name="Pujol A."/>
            <person name="Purnelle B."/>
            <person name="Ramezani Rad M."/>
            <person name="Rasmussen S.W."/>
            <person name="Rose M."/>
            <person name="Rossau R."/>
            <person name="Schaaff-Gerstenschlaeger I."/>
            <person name="Smits P.H.M."/>
            <person name="Scarcez T."/>
            <person name="Soriano N."/>
            <person name="To Van D."/>
            <person name="Tzermia M."/>
            <person name="Van Broekhoven A."/>
            <person name="Vandenbol M."/>
            <person name="Wedler H."/>
            <person name="von Wettstein D."/>
            <person name="Wambutt R."/>
            <person name="Zagulski M."/>
            <person name="Zollner A."/>
            <person name="Karpfinger-Hartl L."/>
        </authorList>
    </citation>
    <scope>NUCLEOTIDE SEQUENCE [LARGE SCALE GENOMIC DNA]</scope>
    <source>
        <strain>ATCC 204508 / S288c</strain>
    </source>
</reference>
<reference key="3">
    <citation type="journal article" date="2014" name="G3 (Bethesda)">
        <title>The reference genome sequence of Saccharomyces cerevisiae: Then and now.</title>
        <authorList>
            <person name="Engel S.R."/>
            <person name="Dietrich F.S."/>
            <person name="Fisk D.G."/>
            <person name="Binkley G."/>
            <person name="Balakrishnan R."/>
            <person name="Costanzo M.C."/>
            <person name="Dwight S.S."/>
            <person name="Hitz B.C."/>
            <person name="Karra K."/>
            <person name="Nash R.S."/>
            <person name="Weng S."/>
            <person name="Wong E.D."/>
            <person name="Lloyd P."/>
            <person name="Skrzypek M.S."/>
            <person name="Miyasato S.R."/>
            <person name="Simison M."/>
            <person name="Cherry J.M."/>
        </authorList>
    </citation>
    <scope>GENOME REANNOTATION</scope>
    <source>
        <strain>ATCC 204508 / S288c</strain>
    </source>
</reference>
<reference key="4">
    <citation type="journal article" date="2007" name="Genome Res.">
        <title>Approaching a complete repository of sequence-verified protein-encoding clones for Saccharomyces cerevisiae.</title>
        <authorList>
            <person name="Hu Y."/>
            <person name="Rolfs A."/>
            <person name="Bhullar B."/>
            <person name="Murthy T.V.S."/>
            <person name="Zhu C."/>
            <person name="Berger M.F."/>
            <person name="Camargo A.A."/>
            <person name="Kelley F."/>
            <person name="McCarron S."/>
            <person name="Jepson D."/>
            <person name="Richardson A."/>
            <person name="Raphael J."/>
            <person name="Moreira D."/>
            <person name="Taycher E."/>
            <person name="Zuo D."/>
            <person name="Mohr S."/>
            <person name="Kane M.F."/>
            <person name="Williamson J."/>
            <person name="Simpson A.J.G."/>
            <person name="Bulyk M.L."/>
            <person name="Harlow E."/>
            <person name="Marsischky G."/>
            <person name="Kolodner R.D."/>
            <person name="LaBaer J."/>
        </authorList>
    </citation>
    <scope>NUCLEOTIDE SEQUENCE [GENOMIC DNA]</scope>
    <source>
        <strain>ATCC 204508 / S288c</strain>
    </source>
</reference>
<gene>
    <name type="ordered locus">YJL067W</name>
    <name type="ORF">HRA116</name>
    <name type="ORF">J1107</name>
</gene>
<sequence length="116" mass="12748">MSKKRKRKYVLIVFVNTHHFMLHLGTGTLGGSGGSNVYRAIVKVDFFSFDGAGFCIIGILRGTNGLCPSNNFLGSICRSIFSIVAQMQVVPIQHEVFWSSSQRLYGSAPSLDSLFL</sequence>
<organism>
    <name type="scientific">Saccharomyces cerevisiae (strain ATCC 204508 / S288c)</name>
    <name type="common">Baker's yeast</name>
    <dbReference type="NCBI Taxonomy" id="559292"/>
    <lineage>
        <taxon>Eukaryota</taxon>
        <taxon>Fungi</taxon>
        <taxon>Dikarya</taxon>
        <taxon>Ascomycota</taxon>
        <taxon>Saccharomycotina</taxon>
        <taxon>Saccharomycetes</taxon>
        <taxon>Saccharomycetales</taxon>
        <taxon>Saccharomycetaceae</taxon>
        <taxon>Saccharomyces</taxon>
    </lineage>
</organism>
<proteinExistence type="uncertain"/>
<evidence type="ECO:0000255" key="1"/>
<evidence type="ECO:0000305" key="2"/>
<evidence type="ECO:0000305" key="3">
    <source>
    </source>
</evidence>
<name>YJG7_YEAST</name>
<dbReference type="EMBL" id="Z34288">
    <property type="protein sequence ID" value="CAA84056.1"/>
    <property type="molecule type" value="Genomic_DNA"/>
</dbReference>
<dbReference type="EMBL" id="Z49342">
    <property type="protein sequence ID" value="CAA89357.1"/>
    <property type="molecule type" value="Genomic_DNA"/>
</dbReference>
<dbReference type="EMBL" id="AY693257">
    <property type="protein sequence ID" value="AAT93276.1"/>
    <property type="molecule type" value="Genomic_DNA"/>
</dbReference>
<dbReference type="PIR" id="S50805">
    <property type="entry name" value="S50805"/>
</dbReference>
<dbReference type="DIP" id="DIP-4042N"/>
<dbReference type="PaxDb" id="4932-YJL067W"/>
<dbReference type="EnsemblFungi" id="YJL067W_mRNA">
    <property type="protein sequence ID" value="YJL067W"/>
    <property type="gene ID" value="YJL067W"/>
</dbReference>
<dbReference type="AGR" id="SGD:S000003603"/>
<dbReference type="SGD" id="S000003603">
    <property type="gene designation" value="YJL067W"/>
</dbReference>
<dbReference type="HOGENOM" id="CLU_2098731_0_0_1"/>
<dbReference type="GO" id="GO:0016020">
    <property type="term" value="C:membrane"/>
    <property type="evidence" value="ECO:0007669"/>
    <property type="project" value="UniProtKB-SubCell"/>
</dbReference>
<accession>P40365</accession>
<keyword id="KW-0472">Membrane</keyword>
<keyword id="KW-0812">Transmembrane</keyword>
<keyword id="KW-1133">Transmembrane helix</keyword>
<feature type="chain" id="PRO_0000203055" description="Putative uncharacterized protein YJL067W">
    <location>
        <begin position="1"/>
        <end position="116"/>
    </location>
</feature>
<feature type="transmembrane region" description="Helical" evidence="1">
    <location>
        <begin position="40"/>
        <end position="60"/>
    </location>
</feature>
<feature type="transmembrane region" description="Helical" evidence="1">
    <location>
        <begin position="72"/>
        <end position="92"/>
    </location>
</feature>
<protein>
    <recommendedName>
        <fullName>Putative uncharacterized protein YJL067W</fullName>
    </recommendedName>
</protein>